<evidence type="ECO:0000255" key="1">
    <source>
        <dbReference type="HAMAP-Rule" id="MF_01320"/>
    </source>
</evidence>
<evidence type="ECO:0000256" key="2">
    <source>
        <dbReference type="SAM" id="MobiDB-lite"/>
    </source>
</evidence>
<evidence type="ECO:0000305" key="3"/>
<gene>
    <name evidence="1" type="primary">rplB</name>
    <name type="ordered locus">BcerKBAB4_0108</name>
</gene>
<reference key="1">
    <citation type="journal article" date="2008" name="Chem. Biol. Interact.">
        <title>Extending the Bacillus cereus group genomics to putative food-borne pathogens of different toxicity.</title>
        <authorList>
            <person name="Lapidus A."/>
            <person name="Goltsman E."/>
            <person name="Auger S."/>
            <person name="Galleron N."/>
            <person name="Segurens B."/>
            <person name="Dossat C."/>
            <person name="Land M.L."/>
            <person name="Broussolle V."/>
            <person name="Brillard J."/>
            <person name="Guinebretiere M.-H."/>
            <person name="Sanchis V."/>
            <person name="Nguen-the C."/>
            <person name="Lereclus D."/>
            <person name="Richardson P."/>
            <person name="Wincker P."/>
            <person name="Weissenbach J."/>
            <person name="Ehrlich S.D."/>
            <person name="Sorokin A."/>
        </authorList>
    </citation>
    <scope>NUCLEOTIDE SEQUENCE [LARGE SCALE GENOMIC DNA]</scope>
    <source>
        <strain>KBAB4</strain>
    </source>
</reference>
<organism>
    <name type="scientific">Bacillus mycoides (strain KBAB4)</name>
    <name type="common">Bacillus weihenstephanensis</name>
    <dbReference type="NCBI Taxonomy" id="315730"/>
    <lineage>
        <taxon>Bacteria</taxon>
        <taxon>Bacillati</taxon>
        <taxon>Bacillota</taxon>
        <taxon>Bacilli</taxon>
        <taxon>Bacillales</taxon>
        <taxon>Bacillaceae</taxon>
        <taxon>Bacillus</taxon>
        <taxon>Bacillus cereus group</taxon>
    </lineage>
</organism>
<feature type="chain" id="PRO_1000141507" description="Large ribosomal subunit protein uL2">
    <location>
        <begin position="1"/>
        <end position="276"/>
    </location>
</feature>
<feature type="region of interest" description="Disordered" evidence="2">
    <location>
        <begin position="1"/>
        <end position="20"/>
    </location>
</feature>
<feature type="region of interest" description="Disordered" evidence="2">
    <location>
        <begin position="219"/>
        <end position="276"/>
    </location>
</feature>
<feature type="compositionally biased region" description="Polar residues" evidence="2">
    <location>
        <begin position="7"/>
        <end position="20"/>
    </location>
</feature>
<protein>
    <recommendedName>
        <fullName evidence="1">Large ribosomal subunit protein uL2</fullName>
    </recommendedName>
    <alternativeName>
        <fullName evidence="3">50S ribosomal protein L2</fullName>
    </alternativeName>
</protein>
<comment type="function">
    <text evidence="1">One of the primary rRNA binding proteins. Required for association of the 30S and 50S subunits to form the 70S ribosome, for tRNA binding and peptide bond formation. It has been suggested to have peptidyltransferase activity; this is somewhat controversial. Makes several contacts with the 16S rRNA in the 70S ribosome.</text>
</comment>
<comment type="subunit">
    <text evidence="1">Part of the 50S ribosomal subunit. Forms a bridge to the 30S subunit in the 70S ribosome.</text>
</comment>
<comment type="similarity">
    <text evidence="1">Belongs to the universal ribosomal protein uL2 family.</text>
</comment>
<name>RL2_BACMK</name>
<proteinExistence type="inferred from homology"/>
<dbReference type="EMBL" id="CP000903">
    <property type="protein sequence ID" value="ABY41377.1"/>
    <property type="molecule type" value="Genomic_DNA"/>
</dbReference>
<dbReference type="RefSeq" id="WP_002063418.1">
    <property type="nucleotide sequence ID" value="NC_010184.1"/>
</dbReference>
<dbReference type="SMR" id="A9VP80"/>
<dbReference type="KEGG" id="bwe:BcerKBAB4_0108"/>
<dbReference type="eggNOG" id="COG0090">
    <property type="taxonomic scope" value="Bacteria"/>
</dbReference>
<dbReference type="HOGENOM" id="CLU_036235_2_1_9"/>
<dbReference type="Proteomes" id="UP000002154">
    <property type="component" value="Chromosome"/>
</dbReference>
<dbReference type="GO" id="GO:0015934">
    <property type="term" value="C:large ribosomal subunit"/>
    <property type="evidence" value="ECO:0007669"/>
    <property type="project" value="InterPro"/>
</dbReference>
<dbReference type="GO" id="GO:0019843">
    <property type="term" value="F:rRNA binding"/>
    <property type="evidence" value="ECO:0007669"/>
    <property type="project" value="UniProtKB-UniRule"/>
</dbReference>
<dbReference type="GO" id="GO:0003735">
    <property type="term" value="F:structural constituent of ribosome"/>
    <property type="evidence" value="ECO:0007669"/>
    <property type="project" value="InterPro"/>
</dbReference>
<dbReference type="GO" id="GO:0016740">
    <property type="term" value="F:transferase activity"/>
    <property type="evidence" value="ECO:0007669"/>
    <property type="project" value="InterPro"/>
</dbReference>
<dbReference type="GO" id="GO:0002181">
    <property type="term" value="P:cytoplasmic translation"/>
    <property type="evidence" value="ECO:0007669"/>
    <property type="project" value="TreeGrafter"/>
</dbReference>
<dbReference type="FunFam" id="2.30.30.30:FF:000001">
    <property type="entry name" value="50S ribosomal protein L2"/>
    <property type="match status" value="1"/>
</dbReference>
<dbReference type="FunFam" id="2.40.50.140:FF:000003">
    <property type="entry name" value="50S ribosomal protein L2"/>
    <property type="match status" value="1"/>
</dbReference>
<dbReference type="FunFam" id="4.10.950.10:FF:000001">
    <property type="entry name" value="50S ribosomal protein L2"/>
    <property type="match status" value="1"/>
</dbReference>
<dbReference type="Gene3D" id="2.30.30.30">
    <property type="match status" value="1"/>
</dbReference>
<dbReference type="Gene3D" id="2.40.50.140">
    <property type="entry name" value="Nucleic acid-binding proteins"/>
    <property type="match status" value="1"/>
</dbReference>
<dbReference type="Gene3D" id="4.10.950.10">
    <property type="entry name" value="Ribosomal protein L2, domain 3"/>
    <property type="match status" value="1"/>
</dbReference>
<dbReference type="HAMAP" id="MF_01320_B">
    <property type="entry name" value="Ribosomal_uL2_B"/>
    <property type="match status" value="1"/>
</dbReference>
<dbReference type="InterPro" id="IPR012340">
    <property type="entry name" value="NA-bd_OB-fold"/>
</dbReference>
<dbReference type="InterPro" id="IPR014722">
    <property type="entry name" value="Rib_uL2_dom2"/>
</dbReference>
<dbReference type="InterPro" id="IPR002171">
    <property type="entry name" value="Ribosomal_uL2"/>
</dbReference>
<dbReference type="InterPro" id="IPR005880">
    <property type="entry name" value="Ribosomal_uL2_bac/org-type"/>
</dbReference>
<dbReference type="InterPro" id="IPR022669">
    <property type="entry name" value="Ribosomal_uL2_C"/>
</dbReference>
<dbReference type="InterPro" id="IPR022671">
    <property type="entry name" value="Ribosomal_uL2_CS"/>
</dbReference>
<dbReference type="InterPro" id="IPR014726">
    <property type="entry name" value="Ribosomal_uL2_dom3"/>
</dbReference>
<dbReference type="InterPro" id="IPR022666">
    <property type="entry name" value="Ribosomal_uL2_RNA-bd_dom"/>
</dbReference>
<dbReference type="InterPro" id="IPR008991">
    <property type="entry name" value="Translation_prot_SH3-like_sf"/>
</dbReference>
<dbReference type="NCBIfam" id="TIGR01171">
    <property type="entry name" value="rplB_bact"/>
    <property type="match status" value="1"/>
</dbReference>
<dbReference type="PANTHER" id="PTHR13691:SF5">
    <property type="entry name" value="LARGE RIBOSOMAL SUBUNIT PROTEIN UL2M"/>
    <property type="match status" value="1"/>
</dbReference>
<dbReference type="PANTHER" id="PTHR13691">
    <property type="entry name" value="RIBOSOMAL PROTEIN L2"/>
    <property type="match status" value="1"/>
</dbReference>
<dbReference type="Pfam" id="PF00181">
    <property type="entry name" value="Ribosomal_L2"/>
    <property type="match status" value="1"/>
</dbReference>
<dbReference type="Pfam" id="PF03947">
    <property type="entry name" value="Ribosomal_L2_C"/>
    <property type="match status" value="1"/>
</dbReference>
<dbReference type="PIRSF" id="PIRSF002158">
    <property type="entry name" value="Ribosomal_L2"/>
    <property type="match status" value="1"/>
</dbReference>
<dbReference type="SMART" id="SM01383">
    <property type="entry name" value="Ribosomal_L2"/>
    <property type="match status" value="1"/>
</dbReference>
<dbReference type="SMART" id="SM01382">
    <property type="entry name" value="Ribosomal_L2_C"/>
    <property type="match status" value="1"/>
</dbReference>
<dbReference type="SUPFAM" id="SSF50249">
    <property type="entry name" value="Nucleic acid-binding proteins"/>
    <property type="match status" value="1"/>
</dbReference>
<dbReference type="SUPFAM" id="SSF50104">
    <property type="entry name" value="Translation proteins SH3-like domain"/>
    <property type="match status" value="1"/>
</dbReference>
<dbReference type="PROSITE" id="PS00467">
    <property type="entry name" value="RIBOSOMAL_L2"/>
    <property type="match status" value="1"/>
</dbReference>
<accession>A9VP80</accession>
<keyword id="KW-0687">Ribonucleoprotein</keyword>
<keyword id="KW-0689">Ribosomal protein</keyword>
<keyword id="KW-0694">RNA-binding</keyword>
<keyword id="KW-0699">rRNA-binding</keyword>
<sequence>MGIKKYNPTTNGRRNMTTNDFAEITTDRPEKSLLAPLSKKAGRNNQGKITVRHQGGGHKRQYRIIDFKRNKDGIPGRVATIEYDPNRSANIALINYVDGEKRYILAPKTLEVGMEVMSGPESDIKIGNALPLINIPVGTVVHNIELKPGRGGQLVRSAGTSAQVLGKEGKYVLVRLTSGEVRLVLSACRASIGQVGNEQHELIKIGKAGRSRWLGKRPTVRGSVMNPVDHPHGGGEGRSPIGRKSPMSPWGKPTLGFKTRKKNKASDKFIVRRRKK</sequence>